<accession>Q89JA0</accession>
<organism>
    <name type="scientific">Bradyrhizobium diazoefficiens (strain JCM 10833 / BCRC 13528 / IAM 13628 / NBRC 14792 / USDA 110)</name>
    <dbReference type="NCBI Taxonomy" id="224911"/>
    <lineage>
        <taxon>Bacteria</taxon>
        <taxon>Pseudomonadati</taxon>
        <taxon>Pseudomonadota</taxon>
        <taxon>Alphaproteobacteria</taxon>
        <taxon>Hyphomicrobiales</taxon>
        <taxon>Nitrobacteraceae</taxon>
        <taxon>Bradyrhizobium</taxon>
    </lineage>
</organism>
<protein>
    <recommendedName>
        <fullName evidence="1">Large ribosomal subunit protein uL18</fullName>
    </recommendedName>
    <alternativeName>
        <fullName evidence="3">50S ribosomal protein L18</fullName>
    </alternativeName>
</protein>
<keyword id="KW-1185">Reference proteome</keyword>
<keyword id="KW-0687">Ribonucleoprotein</keyword>
<keyword id="KW-0689">Ribosomal protein</keyword>
<keyword id="KW-0694">RNA-binding</keyword>
<keyword id="KW-0699">rRNA-binding</keyword>
<gene>
    <name evidence="1" type="primary">rplR</name>
    <name type="ordered locus">bll5384</name>
</gene>
<evidence type="ECO:0000255" key="1">
    <source>
        <dbReference type="HAMAP-Rule" id="MF_01337"/>
    </source>
</evidence>
<evidence type="ECO:0000256" key="2">
    <source>
        <dbReference type="SAM" id="MobiDB-lite"/>
    </source>
</evidence>
<evidence type="ECO:0000305" key="3"/>
<feature type="chain" id="PRO_0000131227" description="Large ribosomal subunit protein uL18">
    <location>
        <begin position="1"/>
        <end position="120"/>
    </location>
</feature>
<feature type="region of interest" description="Disordered" evidence="2">
    <location>
        <begin position="1"/>
        <end position="26"/>
    </location>
</feature>
<feature type="compositionally biased region" description="Basic residues" evidence="2">
    <location>
        <begin position="8"/>
        <end position="23"/>
    </location>
</feature>
<name>RL18_BRADU</name>
<comment type="function">
    <text evidence="1">This is one of the proteins that bind and probably mediate the attachment of the 5S RNA into the large ribosomal subunit, where it forms part of the central protuberance.</text>
</comment>
<comment type="subunit">
    <text evidence="1">Part of the 50S ribosomal subunit; part of the 5S rRNA/L5/L18/L25 subcomplex. Contacts the 5S and 23S rRNAs.</text>
</comment>
<comment type="similarity">
    <text evidence="1">Belongs to the universal ribosomal protein uL18 family.</text>
</comment>
<dbReference type="EMBL" id="BA000040">
    <property type="protein sequence ID" value="BAC50649.1"/>
    <property type="molecule type" value="Genomic_DNA"/>
</dbReference>
<dbReference type="RefSeq" id="NP_772024.1">
    <property type="nucleotide sequence ID" value="NC_004463.1"/>
</dbReference>
<dbReference type="RefSeq" id="WP_007603036.1">
    <property type="nucleotide sequence ID" value="NZ_CP011360.1"/>
</dbReference>
<dbReference type="SMR" id="Q89JA0"/>
<dbReference type="FunCoup" id="Q89JA0">
    <property type="interactions" value="777"/>
</dbReference>
<dbReference type="STRING" id="224911.AAV28_24330"/>
<dbReference type="EnsemblBacteria" id="BAC50649">
    <property type="protein sequence ID" value="BAC50649"/>
    <property type="gene ID" value="BAC50649"/>
</dbReference>
<dbReference type="GeneID" id="92966365"/>
<dbReference type="KEGG" id="bja:bll5384"/>
<dbReference type="PATRIC" id="fig|224911.44.peg.5283"/>
<dbReference type="eggNOG" id="COG0256">
    <property type="taxonomic scope" value="Bacteria"/>
</dbReference>
<dbReference type="HOGENOM" id="CLU_098841_0_1_5"/>
<dbReference type="InParanoid" id="Q89JA0"/>
<dbReference type="OrthoDB" id="9810939at2"/>
<dbReference type="PhylomeDB" id="Q89JA0"/>
<dbReference type="PRO" id="PR:Q89JA0"/>
<dbReference type="Proteomes" id="UP000002526">
    <property type="component" value="Chromosome"/>
</dbReference>
<dbReference type="GO" id="GO:0022625">
    <property type="term" value="C:cytosolic large ribosomal subunit"/>
    <property type="evidence" value="ECO:0000318"/>
    <property type="project" value="GO_Central"/>
</dbReference>
<dbReference type="GO" id="GO:0008097">
    <property type="term" value="F:5S rRNA binding"/>
    <property type="evidence" value="ECO:0000318"/>
    <property type="project" value="GO_Central"/>
</dbReference>
<dbReference type="GO" id="GO:0003735">
    <property type="term" value="F:structural constituent of ribosome"/>
    <property type="evidence" value="ECO:0007669"/>
    <property type="project" value="InterPro"/>
</dbReference>
<dbReference type="GO" id="GO:0006412">
    <property type="term" value="P:translation"/>
    <property type="evidence" value="ECO:0007669"/>
    <property type="project" value="UniProtKB-UniRule"/>
</dbReference>
<dbReference type="CDD" id="cd00432">
    <property type="entry name" value="Ribosomal_L18_L5e"/>
    <property type="match status" value="1"/>
</dbReference>
<dbReference type="FunFam" id="3.30.420.100:FF:000001">
    <property type="entry name" value="50S ribosomal protein L18"/>
    <property type="match status" value="1"/>
</dbReference>
<dbReference type="Gene3D" id="3.30.420.100">
    <property type="match status" value="1"/>
</dbReference>
<dbReference type="HAMAP" id="MF_01337_B">
    <property type="entry name" value="Ribosomal_uL18_B"/>
    <property type="match status" value="1"/>
</dbReference>
<dbReference type="InterPro" id="IPR004389">
    <property type="entry name" value="Ribosomal_uL18_bac-type"/>
</dbReference>
<dbReference type="InterPro" id="IPR005484">
    <property type="entry name" value="Ribosomal_uL18_bac/euk"/>
</dbReference>
<dbReference type="NCBIfam" id="TIGR00060">
    <property type="entry name" value="L18_bact"/>
    <property type="match status" value="1"/>
</dbReference>
<dbReference type="PANTHER" id="PTHR12899">
    <property type="entry name" value="39S RIBOSOMAL PROTEIN L18, MITOCHONDRIAL"/>
    <property type="match status" value="1"/>
</dbReference>
<dbReference type="PANTHER" id="PTHR12899:SF3">
    <property type="entry name" value="LARGE RIBOSOMAL SUBUNIT PROTEIN UL18M"/>
    <property type="match status" value="1"/>
</dbReference>
<dbReference type="Pfam" id="PF00861">
    <property type="entry name" value="Ribosomal_L18p"/>
    <property type="match status" value="1"/>
</dbReference>
<dbReference type="SUPFAM" id="SSF53137">
    <property type="entry name" value="Translational machinery components"/>
    <property type="match status" value="1"/>
</dbReference>
<reference key="1">
    <citation type="journal article" date="2002" name="DNA Res.">
        <title>Complete genomic sequence of nitrogen-fixing symbiotic bacterium Bradyrhizobium japonicum USDA110.</title>
        <authorList>
            <person name="Kaneko T."/>
            <person name="Nakamura Y."/>
            <person name="Sato S."/>
            <person name="Minamisawa K."/>
            <person name="Uchiumi T."/>
            <person name="Sasamoto S."/>
            <person name="Watanabe A."/>
            <person name="Idesawa K."/>
            <person name="Iriguchi M."/>
            <person name="Kawashima K."/>
            <person name="Kohara M."/>
            <person name="Matsumoto M."/>
            <person name="Shimpo S."/>
            <person name="Tsuruoka H."/>
            <person name="Wada T."/>
            <person name="Yamada M."/>
            <person name="Tabata S."/>
        </authorList>
    </citation>
    <scope>NUCLEOTIDE SEQUENCE [LARGE SCALE GENOMIC DNA]</scope>
    <source>
        <strain>JCM 10833 / BCRC 13528 / IAM 13628 / NBRC 14792 / USDA 110</strain>
    </source>
</reference>
<proteinExistence type="inferred from homology"/>
<sequence>MSKAKVTNARRKRSVRLKLRRSGGGRPRLSVFRSSKHIYAQVIDDLKGETLASASSLEKSMRDGGKTGADIDAAKAVGKLLAERAAEKGVKEVVFDRGSYLYHGRVKALADAARESGLSF</sequence>